<proteinExistence type="inferred from homology"/>
<accession>Q7MM45</accession>
<comment type="function">
    <text evidence="1">May act as a double-stranded DNA (dsDNA) mimic. Probably regulates the activity of a dsDNA-binding protein.</text>
</comment>
<comment type="similarity">
    <text evidence="1">Belongs to the putative dsDNA mimic protein family.</text>
</comment>
<gene>
    <name type="ordered locus">VV1228</name>
</gene>
<sequence length="106" mass="12070">MADLISYDDAIDAAYDIFLEMAPDNLEPVDVILFTAQFDDRGAAELVDISDDWAGHVGFDVDKESYAEVRIGLVNEENDVLDDVFARMLISRDPDQKFCHILWKRD</sequence>
<name>Y1228_VIBVY</name>
<protein>
    <recommendedName>
        <fullName evidence="1">Putative double-stranded DNA mimic protein VV1228</fullName>
    </recommendedName>
</protein>
<feature type="chain" id="PRO_0000072788" description="Putative double-stranded DNA mimic protein VV1228">
    <location>
        <begin position="1"/>
        <end position="106"/>
    </location>
</feature>
<organism>
    <name type="scientific">Vibrio vulnificus (strain YJ016)</name>
    <dbReference type="NCBI Taxonomy" id="196600"/>
    <lineage>
        <taxon>Bacteria</taxon>
        <taxon>Pseudomonadati</taxon>
        <taxon>Pseudomonadota</taxon>
        <taxon>Gammaproteobacteria</taxon>
        <taxon>Vibrionales</taxon>
        <taxon>Vibrionaceae</taxon>
        <taxon>Vibrio</taxon>
    </lineage>
</organism>
<evidence type="ECO:0000255" key="1">
    <source>
        <dbReference type="HAMAP-Rule" id="MF_00680"/>
    </source>
</evidence>
<reference key="1">
    <citation type="journal article" date="2003" name="Genome Res.">
        <title>Comparative genome analysis of Vibrio vulnificus, a marine pathogen.</title>
        <authorList>
            <person name="Chen C.-Y."/>
            <person name="Wu K.-M."/>
            <person name="Chang Y.-C."/>
            <person name="Chang C.-H."/>
            <person name="Tsai H.-C."/>
            <person name="Liao T.-L."/>
            <person name="Liu Y.-M."/>
            <person name="Chen H.-J."/>
            <person name="Shen A.B.-T."/>
            <person name="Li J.-C."/>
            <person name="Su T.-L."/>
            <person name="Shao C.-P."/>
            <person name="Lee C.-T."/>
            <person name="Hor L.-I."/>
            <person name="Tsai S.-F."/>
        </authorList>
    </citation>
    <scope>NUCLEOTIDE SEQUENCE [LARGE SCALE GENOMIC DNA]</scope>
    <source>
        <strain>YJ016</strain>
    </source>
</reference>
<dbReference type="EMBL" id="BA000037">
    <property type="protein sequence ID" value="BAC93992.1"/>
    <property type="molecule type" value="Genomic_DNA"/>
</dbReference>
<dbReference type="RefSeq" id="WP_011149935.1">
    <property type="nucleotide sequence ID" value="NC_005139.1"/>
</dbReference>
<dbReference type="SMR" id="Q7MM45"/>
<dbReference type="STRING" id="672.VV93_v1c11450"/>
<dbReference type="KEGG" id="vvy:VV1228"/>
<dbReference type="PATRIC" id="fig|196600.6.peg.1220"/>
<dbReference type="eggNOG" id="COG3099">
    <property type="taxonomic scope" value="Bacteria"/>
</dbReference>
<dbReference type="HOGENOM" id="CLU_143392_0_0_6"/>
<dbReference type="Proteomes" id="UP000002675">
    <property type="component" value="Chromosome I"/>
</dbReference>
<dbReference type="Gene3D" id="3.10.450.140">
    <property type="entry name" value="dsDNA mimic, putative"/>
    <property type="match status" value="1"/>
</dbReference>
<dbReference type="HAMAP" id="MF_00680">
    <property type="entry name" value="Put_dsDNA_mimic"/>
    <property type="match status" value="1"/>
</dbReference>
<dbReference type="InterPro" id="IPR007376">
    <property type="entry name" value="dsDNA_mimic_put"/>
</dbReference>
<dbReference type="InterPro" id="IPR036763">
    <property type="entry name" value="Put_dsDNA_mimic_sf"/>
</dbReference>
<dbReference type="NCBIfam" id="NF003469">
    <property type="entry name" value="PRK05094.1"/>
    <property type="match status" value="1"/>
</dbReference>
<dbReference type="Pfam" id="PF04269">
    <property type="entry name" value="DUF440"/>
    <property type="match status" value="1"/>
</dbReference>
<dbReference type="PIRSF" id="PIRSF004916">
    <property type="entry name" value="UCP004916"/>
    <property type="match status" value="1"/>
</dbReference>
<dbReference type="SUPFAM" id="SSF102816">
    <property type="entry name" value="Putative dsDNA mimic"/>
    <property type="match status" value="1"/>
</dbReference>